<accession>A3QG97</accession>
<protein>
    <recommendedName>
        <fullName evidence="1">1-deoxy-D-xylulose 5-phosphate reductoisomerase</fullName>
        <shortName evidence="1">DXP reductoisomerase</shortName>
        <ecNumber evidence="1">1.1.1.267</ecNumber>
    </recommendedName>
    <alternativeName>
        <fullName evidence="1">1-deoxyxylulose-5-phosphate reductoisomerase</fullName>
    </alternativeName>
    <alternativeName>
        <fullName evidence="1">2-C-methyl-D-erythritol 4-phosphate synthase</fullName>
    </alternativeName>
</protein>
<proteinExistence type="inferred from homology"/>
<keyword id="KW-0414">Isoprene biosynthesis</keyword>
<keyword id="KW-0464">Manganese</keyword>
<keyword id="KW-0479">Metal-binding</keyword>
<keyword id="KW-0521">NADP</keyword>
<keyword id="KW-0560">Oxidoreductase</keyword>
<keyword id="KW-1185">Reference proteome</keyword>
<feature type="chain" id="PRO_1000020309" description="1-deoxy-D-xylulose 5-phosphate reductoisomerase">
    <location>
        <begin position="1"/>
        <end position="395"/>
    </location>
</feature>
<feature type="binding site" evidence="1">
    <location>
        <position position="10"/>
    </location>
    <ligand>
        <name>NADPH</name>
        <dbReference type="ChEBI" id="CHEBI:57783"/>
    </ligand>
</feature>
<feature type="binding site" evidence="1">
    <location>
        <position position="11"/>
    </location>
    <ligand>
        <name>NADPH</name>
        <dbReference type="ChEBI" id="CHEBI:57783"/>
    </ligand>
</feature>
<feature type="binding site" evidence="1">
    <location>
        <position position="12"/>
    </location>
    <ligand>
        <name>NADPH</name>
        <dbReference type="ChEBI" id="CHEBI:57783"/>
    </ligand>
</feature>
<feature type="binding site" evidence="1">
    <location>
        <position position="13"/>
    </location>
    <ligand>
        <name>NADPH</name>
        <dbReference type="ChEBI" id="CHEBI:57783"/>
    </ligand>
</feature>
<feature type="binding site" evidence="1">
    <location>
        <position position="37"/>
    </location>
    <ligand>
        <name>NADPH</name>
        <dbReference type="ChEBI" id="CHEBI:57783"/>
    </ligand>
</feature>
<feature type="binding site" evidence="1">
    <location>
        <position position="123"/>
    </location>
    <ligand>
        <name>NADPH</name>
        <dbReference type="ChEBI" id="CHEBI:57783"/>
    </ligand>
</feature>
<feature type="binding site" evidence="1">
    <location>
        <position position="124"/>
    </location>
    <ligand>
        <name>1-deoxy-D-xylulose 5-phosphate</name>
        <dbReference type="ChEBI" id="CHEBI:57792"/>
    </ligand>
</feature>
<feature type="binding site" evidence="1">
    <location>
        <position position="125"/>
    </location>
    <ligand>
        <name>NADPH</name>
        <dbReference type="ChEBI" id="CHEBI:57783"/>
    </ligand>
</feature>
<feature type="binding site" evidence="1">
    <location>
        <position position="149"/>
    </location>
    <ligand>
        <name>Mn(2+)</name>
        <dbReference type="ChEBI" id="CHEBI:29035"/>
    </ligand>
</feature>
<feature type="binding site" evidence="1">
    <location>
        <position position="150"/>
    </location>
    <ligand>
        <name>1-deoxy-D-xylulose 5-phosphate</name>
        <dbReference type="ChEBI" id="CHEBI:57792"/>
    </ligand>
</feature>
<feature type="binding site" evidence="1">
    <location>
        <position position="151"/>
    </location>
    <ligand>
        <name>1-deoxy-D-xylulose 5-phosphate</name>
        <dbReference type="ChEBI" id="CHEBI:57792"/>
    </ligand>
</feature>
<feature type="binding site" evidence="1">
    <location>
        <position position="151"/>
    </location>
    <ligand>
        <name>Mn(2+)</name>
        <dbReference type="ChEBI" id="CHEBI:29035"/>
    </ligand>
</feature>
<feature type="binding site" evidence="1">
    <location>
        <position position="185"/>
    </location>
    <ligand>
        <name>1-deoxy-D-xylulose 5-phosphate</name>
        <dbReference type="ChEBI" id="CHEBI:57792"/>
    </ligand>
</feature>
<feature type="binding site" evidence="1">
    <location>
        <position position="208"/>
    </location>
    <ligand>
        <name>1-deoxy-D-xylulose 5-phosphate</name>
        <dbReference type="ChEBI" id="CHEBI:57792"/>
    </ligand>
</feature>
<feature type="binding site" evidence="1">
    <location>
        <position position="214"/>
    </location>
    <ligand>
        <name>NADPH</name>
        <dbReference type="ChEBI" id="CHEBI:57783"/>
    </ligand>
</feature>
<feature type="binding site" evidence="1">
    <location>
        <position position="221"/>
    </location>
    <ligand>
        <name>1-deoxy-D-xylulose 5-phosphate</name>
        <dbReference type="ChEBI" id="CHEBI:57792"/>
    </ligand>
</feature>
<feature type="binding site" evidence="1">
    <location>
        <position position="226"/>
    </location>
    <ligand>
        <name>1-deoxy-D-xylulose 5-phosphate</name>
        <dbReference type="ChEBI" id="CHEBI:57792"/>
    </ligand>
</feature>
<feature type="binding site" evidence="1">
    <location>
        <position position="227"/>
    </location>
    <ligand>
        <name>1-deoxy-D-xylulose 5-phosphate</name>
        <dbReference type="ChEBI" id="CHEBI:57792"/>
    </ligand>
</feature>
<feature type="binding site" evidence="1">
    <location>
        <position position="230"/>
    </location>
    <ligand>
        <name>1-deoxy-D-xylulose 5-phosphate</name>
        <dbReference type="ChEBI" id="CHEBI:57792"/>
    </ligand>
</feature>
<feature type="binding site" evidence="1">
    <location>
        <position position="230"/>
    </location>
    <ligand>
        <name>Mn(2+)</name>
        <dbReference type="ChEBI" id="CHEBI:29035"/>
    </ligand>
</feature>
<organism>
    <name type="scientific">Shewanella loihica (strain ATCC BAA-1088 / PV-4)</name>
    <dbReference type="NCBI Taxonomy" id="323850"/>
    <lineage>
        <taxon>Bacteria</taxon>
        <taxon>Pseudomonadati</taxon>
        <taxon>Pseudomonadota</taxon>
        <taxon>Gammaproteobacteria</taxon>
        <taxon>Alteromonadales</taxon>
        <taxon>Shewanellaceae</taxon>
        <taxon>Shewanella</taxon>
    </lineage>
</organism>
<comment type="function">
    <text evidence="1">Catalyzes the NADPH-dependent rearrangement and reduction of 1-deoxy-D-xylulose-5-phosphate (DXP) to 2-C-methyl-D-erythritol 4-phosphate (MEP).</text>
</comment>
<comment type="catalytic activity">
    <reaction evidence="1">
        <text>2-C-methyl-D-erythritol 4-phosphate + NADP(+) = 1-deoxy-D-xylulose 5-phosphate + NADPH + H(+)</text>
        <dbReference type="Rhea" id="RHEA:13717"/>
        <dbReference type="ChEBI" id="CHEBI:15378"/>
        <dbReference type="ChEBI" id="CHEBI:57783"/>
        <dbReference type="ChEBI" id="CHEBI:57792"/>
        <dbReference type="ChEBI" id="CHEBI:58262"/>
        <dbReference type="ChEBI" id="CHEBI:58349"/>
        <dbReference type="EC" id="1.1.1.267"/>
    </reaction>
    <physiologicalReaction direction="right-to-left" evidence="1">
        <dbReference type="Rhea" id="RHEA:13719"/>
    </physiologicalReaction>
</comment>
<comment type="cofactor">
    <cofactor evidence="1">
        <name>Mg(2+)</name>
        <dbReference type="ChEBI" id="CHEBI:18420"/>
    </cofactor>
    <cofactor evidence="1">
        <name>Mn(2+)</name>
        <dbReference type="ChEBI" id="CHEBI:29035"/>
    </cofactor>
</comment>
<comment type="pathway">
    <text evidence="1">Isoprenoid biosynthesis; isopentenyl diphosphate biosynthesis via DXP pathway; isopentenyl diphosphate from 1-deoxy-D-xylulose 5-phosphate: step 1/6.</text>
</comment>
<comment type="similarity">
    <text evidence="1">Belongs to the DXR family.</text>
</comment>
<name>DXR_SHELP</name>
<gene>
    <name evidence="1" type="primary">dxr</name>
    <name type="ordered locus">Shew_2629</name>
</gene>
<sequence>MQKMVILGATGSIGASTLSVIEQNPEAYKAFALVAHKSVDKMLDLCIKYNPSIAHMVDPQAAAELQRRLPAHMAIAVSSGEDELAAIVALPEVDCVMAAIVGAAGLPATLAAVKAGKRVLLANKESLVMSGRLFIDAMQGSNAKVLPVDSEHNAIFQCLPEPAQQAIGACDLAGAGISHILLTGSGGPFLTSDLDSLSQMTPDQACKHPNWSMGRKISVDSASMMNKGLEYIEARWLFNATKEQLKVVVHPQSVIHSMVQYKDGSVLAQMGNPDMRTPIAHCMAYPQRISAGVEPLDFFKVGQLSFLEPDFNRFPCLKLAIDACEQGQEATTVLNAANEVSVEAFLAGLIRFTDIARVNEYCLSHVEQRSLDTIEDILALDGLARRAAQERVAKL</sequence>
<reference key="1">
    <citation type="submission" date="2007-03" db="EMBL/GenBank/DDBJ databases">
        <title>Complete sequence of Shewanella loihica PV-4.</title>
        <authorList>
            <consortium name="US DOE Joint Genome Institute"/>
            <person name="Copeland A."/>
            <person name="Lucas S."/>
            <person name="Lapidus A."/>
            <person name="Barry K."/>
            <person name="Detter J.C."/>
            <person name="Glavina del Rio T."/>
            <person name="Hammon N."/>
            <person name="Israni S."/>
            <person name="Dalin E."/>
            <person name="Tice H."/>
            <person name="Pitluck S."/>
            <person name="Chain P."/>
            <person name="Malfatti S."/>
            <person name="Shin M."/>
            <person name="Vergez L."/>
            <person name="Schmutz J."/>
            <person name="Larimer F."/>
            <person name="Land M."/>
            <person name="Hauser L."/>
            <person name="Kyrpides N."/>
            <person name="Mikhailova N."/>
            <person name="Romine M.F."/>
            <person name="Serres G."/>
            <person name="Fredrickson J."/>
            <person name="Tiedje J."/>
            <person name="Richardson P."/>
        </authorList>
    </citation>
    <scope>NUCLEOTIDE SEQUENCE [LARGE SCALE GENOMIC DNA]</scope>
    <source>
        <strain>ATCC BAA-1088 / PV-4</strain>
    </source>
</reference>
<evidence type="ECO:0000255" key="1">
    <source>
        <dbReference type="HAMAP-Rule" id="MF_00183"/>
    </source>
</evidence>
<dbReference type="EC" id="1.1.1.267" evidence="1"/>
<dbReference type="EMBL" id="CP000606">
    <property type="protein sequence ID" value="ABO24495.1"/>
    <property type="molecule type" value="Genomic_DNA"/>
</dbReference>
<dbReference type="RefSeq" id="WP_011866426.1">
    <property type="nucleotide sequence ID" value="NC_009092.1"/>
</dbReference>
<dbReference type="SMR" id="A3QG97"/>
<dbReference type="STRING" id="323850.Shew_2629"/>
<dbReference type="KEGG" id="slo:Shew_2629"/>
<dbReference type="eggNOG" id="COG0743">
    <property type="taxonomic scope" value="Bacteria"/>
</dbReference>
<dbReference type="HOGENOM" id="CLU_035714_4_0_6"/>
<dbReference type="OrthoDB" id="9806546at2"/>
<dbReference type="UniPathway" id="UPA00056">
    <property type="reaction ID" value="UER00092"/>
</dbReference>
<dbReference type="Proteomes" id="UP000001558">
    <property type="component" value="Chromosome"/>
</dbReference>
<dbReference type="GO" id="GO:0030604">
    <property type="term" value="F:1-deoxy-D-xylulose-5-phosphate reductoisomerase activity"/>
    <property type="evidence" value="ECO:0007669"/>
    <property type="project" value="UniProtKB-UniRule"/>
</dbReference>
<dbReference type="GO" id="GO:0030145">
    <property type="term" value="F:manganese ion binding"/>
    <property type="evidence" value="ECO:0007669"/>
    <property type="project" value="TreeGrafter"/>
</dbReference>
<dbReference type="GO" id="GO:0070402">
    <property type="term" value="F:NADPH binding"/>
    <property type="evidence" value="ECO:0007669"/>
    <property type="project" value="InterPro"/>
</dbReference>
<dbReference type="GO" id="GO:0051484">
    <property type="term" value="P:isopentenyl diphosphate biosynthetic process, methylerythritol 4-phosphate pathway involved in terpenoid biosynthetic process"/>
    <property type="evidence" value="ECO:0007669"/>
    <property type="project" value="TreeGrafter"/>
</dbReference>
<dbReference type="FunFam" id="1.10.1740.10:FF:000004">
    <property type="entry name" value="1-deoxy-D-xylulose 5-phosphate reductoisomerase"/>
    <property type="match status" value="1"/>
</dbReference>
<dbReference type="FunFam" id="3.40.50.720:FF:000045">
    <property type="entry name" value="1-deoxy-D-xylulose 5-phosphate reductoisomerase"/>
    <property type="match status" value="1"/>
</dbReference>
<dbReference type="Gene3D" id="1.10.1740.10">
    <property type="match status" value="1"/>
</dbReference>
<dbReference type="Gene3D" id="3.40.50.720">
    <property type="entry name" value="NAD(P)-binding Rossmann-like Domain"/>
    <property type="match status" value="1"/>
</dbReference>
<dbReference type="HAMAP" id="MF_00183">
    <property type="entry name" value="DXP_reductoisom"/>
    <property type="match status" value="1"/>
</dbReference>
<dbReference type="InterPro" id="IPR003821">
    <property type="entry name" value="DXP_reductoisomerase"/>
</dbReference>
<dbReference type="InterPro" id="IPR013644">
    <property type="entry name" value="DXP_reductoisomerase_C"/>
</dbReference>
<dbReference type="InterPro" id="IPR013512">
    <property type="entry name" value="DXP_reductoisomerase_N"/>
</dbReference>
<dbReference type="InterPro" id="IPR026877">
    <property type="entry name" value="DXPR_C"/>
</dbReference>
<dbReference type="InterPro" id="IPR036169">
    <property type="entry name" value="DXPR_C_sf"/>
</dbReference>
<dbReference type="InterPro" id="IPR036291">
    <property type="entry name" value="NAD(P)-bd_dom_sf"/>
</dbReference>
<dbReference type="NCBIfam" id="TIGR00243">
    <property type="entry name" value="Dxr"/>
    <property type="match status" value="1"/>
</dbReference>
<dbReference type="NCBIfam" id="NF003938">
    <property type="entry name" value="PRK05447.1-1"/>
    <property type="match status" value="1"/>
</dbReference>
<dbReference type="NCBIfam" id="NF009114">
    <property type="entry name" value="PRK12464.1"/>
    <property type="match status" value="1"/>
</dbReference>
<dbReference type="PANTHER" id="PTHR30525">
    <property type="entry name" value="1-DEOXY-D-XYLULOSE 5-PHOSPHATE REDUCTOISOMERASE"/>
    <property type="match status" value="1"/>
</dbReference>
<dbReference type="PANTHER" id="PTHR30525:SF0">
    <property type="entry name" value="1-DEOXY-D-XYLULOSE 5-PHOSPHATE REDUCTOISOMERASE, CHLOROPLASTIC"/>
    <property type="match status" value="1"/>
</dbReference>
<dbReference type="Pfam" id="PF08436">
    <property type="entry name" value="DXP_redisom_C"/>
    <property type="match status" value="1"/>
</dbReference>
<dbReference type="Pfam" id="PF02670">
    <property type="entry name" value="DXP_reductoisom"/>
    <property type="match status" value="1"/>
</dbReference>
<dbReference type="Pfam" id="PF13288">
    <property type="entry name" value="DXPR_C"/>
    <property type="match status" value="1"/>
</dbReference>
<dbReference type="PIRSF" id="PIRSF006205">
    <property type="entry name" value="Dxp_reductismrs"/>
    <property type="match status" value="1"/>
</dbReference>
<dbReference type="SUPFAM" id="SSF69055">
    <property type="entry name" value="1-deoxy-D-xylulose-5-phosphate reductoisomerase, C-terminal domain"/>
    <property type="match status" value="1"/>
</dbReference>
<dbReference type="SUPFAM" id="SSF55347">
    <property type="entry name" value="Glyceraldehyde-3-phosphate dehydrogenase-like, C-terminal domain"/>
    <property type="match status" value="1"/>
</dbReference>
<dbReference type="SUPFAM" id="SSF51735">
    <property type="entry name" value="NAD(P)-binding Rossmann-fold domains"/>
    <property type="match status" value="1"/>
</dbReference>